<dbReference type="EMBL" id="CP000764">
    <property type="protein sequence ID" value="ABS24190.1"/>
    <property type="molecule type" value="Genomic_DNA"/>
</dbReference>
<dbReference type="RefSeq" id="WP_012096452.1">
    <property type="nucleotide sequence ID" value="NC_009674.1"/>
</dbReference>
<dbReference type="SMR" id="A7GVN2"/>
<dbReference type="STRING" id="315749.Bcer98_4009"/>
<dbReference type="GeneID" id="33899239"/>
<dbReference type="KEGG" id="bcy:Bcer98_4009"/>
<dbReference type="eggNOG" id="COG0359">
    <property type="taxonomic scope" value="Bacteria"/>
</dbReference>
<dbReference type="HOGENOM" id="CLU_078938_3_2_9"/>
<dbReference type="OrthoDB" id="9788336at2"/>
<dbReference type="Proteomes" id="UP000002300">
    <property type="component" value="Chromosome"/>
</dbReference>
<dbReference type="GO" id="GO:1990904">
    <property type="term" value="C:ribonucleoprotein complex"/>
    <property type="evidence" value="ECO:0007669"/>
    <property type="project" value="UniProtKB-KW"/>
</dbReference>
<dbReference type="GO" id="GO:0005840">
    <property type="term" value="C:ribosome"/>
    <property type="evidence" value="ECO:0007669"/>
    <property type="project" value="UniProtKB-KW"/>
</dbReference>
<dbReference type="GO" id="GO:0019843">
    <property type="term" value="F:rRNA binding"/>
    <property type="evidence" value="ECO:0007669"/>
    <property type="project" value="UniProtKB-UniRule"/>
</dbReference>
<dbReference type="GO" id="GO:0003735">
    <property type="term" value="F:structural constituent of ribosome"/>
    <property type="evidence" value="ECO:0007669"/>
    <property type="project" value="InterPro"/>
</dbReference>
<dbReference type="GO" id="GO:0006412">
    <property type="term" value="P:translation"/>
    <property type="evidence" value="ECO:0007669"/>
    <property type="project" value="UniProtKB-UniRule"/>
</dbReference>
<dbReference type="FunFam" id="3.10.430.100:FF:000002">
    <property type="entry name" value="50S ribosomal protein L9"/>
    <property type="match status" value="1"/>
</dbReference>
<dbReference type="FunFam" id="3.40.5.10:FF:000002">
    <property type="entry name" value="50S ribosomal protein L9"/>
    <property type="match status" value="1"/>
</dbReference>
<dbReference type="Gene3D" id="3.10.430.100">
    <property type="entry name" value="Ribosomal protein L9, C-terminal domain"/>
    <property type="match status" value="1"/>
</dbReference>
<dbReference type="Gene3D" id="3.40.5.10">
    <property type="entry name" value="Ribosomal protein L9, N-terminal domain"/>
    <property type="match status" value="1"/>
</dbReference>
<dbReference type="HAMAP" id="MF_00503">
    <property type="entry name" value="Ribosomal_bL9"/>
    <property type="match status" value="1"/>
</dbReference>
<dbReference type="InterPro" id="IPR000244">
    <property type="entry name" value="Ribosomal_bL9"/>
</dbReference>
<dbReference type="InterPro" id="IPR009027">
    <property type="entry name" value="Ribosomal_bL9/RNase_H1_N"/>
</dbReference>
<dbReference type="InterPro" id="IPR020594">
    <property type="entry name" value="Ribosomal_bL9_bac/chp"/>
</dbReference>
<dbReference type="InterPro" id="IPR020069">
    <property type="entry name" value="Ribosomal_bL9_C"/>
</dbReference>
<dbReference type="InterPro" id="IPR036791">
    <property type="entry name" value="Ribosomal_bL9_C_sf"/>
</dbReference>
<dbReference type="InterPro" id="IPR020070">
    <property type="entry name" value="Ribosomal_bL9_N"/>
</dbReference>
<dbReference type="InterPro" id="IPR036935">
    <property type="entry name" value="Ribosomal_bL9_N_sf"/>
</dbReference>
<dbReference type="NCBIfam" id="TIGR00158">
    <property type="entry name" value="L9"/>
    <property type="match status" value="1"/>
</dbReference>
<dbReference type="PANTHER" id="PTHR21368">
    <property type="entry name" value="50S RIBOSOMAL PROTEIN L9"/>
    <property type="match status" value="1"/>
</dbReference>
<dbReference type="Pfam" id="PF03948">
    <property type="entry name" value="Ribosomal_L9_C"/>
    <property type="match status" value="1"/>
</dbReference>
<dbReference type="Pfam" id="PF01281">
    <property type="entry name" value="Ribosomal_L9_N"/>
    <property type="match status" value="1"/>
</dbReference>
<dbReference type="SUPFAM" id="SSF55658">
    <property type="entry name" value="L9 N-domain-like"/>
    <property type="match status" value="1"/>
</dbReference>
<dbReference type="SUPFAM" id="SSF55653">
    <property type="entry name" value="Ribosomal protein L9 C-domain"/>
    <property type="match status" value="1"/>
</dbReference>
<dbReference type="PROSITE" id="PS00651">
    <property type="entry name" value="RIBOSOMAL_L9"/>
    <property type="match status" value="1"/>
</dbReference>
<feature type="chain" id="PRO_1000081464" description="Large ribosomal subunit protein bL9">
    <location>
        <begin position="1"/>
        <end position="148"/>
    </location>
</feature>
<keyword id="KW-0687">Ribonucleoprotein</keyword>
<keyword id="KW-0689">Ribosomal protein</keyword>
<keyword id="KW-0694">RNA-binding</keyword>
<keyword id="KW-0699">rRNA-binding</keyword>
<organism>
    <name type="scientific">Bacillus cytotoxicus (strain DSM 22905 / CIP 110041 / 391-98 / NVH 391-98)</name>
    <dbReference type="NCBI Taxonomy" id="315749"/>
    <lineage>
        <taxon>Bacteria</taxon>
        <taxon>Bacillati</taxon>
        <taxon>Bacillota</taxon>
        <taxon>Bacilli</taxon>
        <taxon>Bacillales</taxon>
        <taxon>Bacillaceae</taxon>
        <taxon>Bacillus</taxon>
        <taxon>Bacillus cereus group</taxon>
    </lineage>
</organism>
<sequence length="148" mass="16535">MKVIFLKDVKGKGKKGEIKNVPDGYANNFLLKQGLAAEANNSNMKTLEAQKRKEEKEAAAELENAKKLKETLEKLTVELKAKSGEGGRLFGSITSKQIVDELQKTHKIKLDKRKFEMEDAIRSLGYTNVTVKLHPQVTATVKVHVSEQ</sequence>
<name>RL9_BACCN</name>
<evidence type="ECO:0000255" key="1">
    <source>
        <dbReference type="HAMAP-Rule" id="MF_00503"/>
    </source>
</evidence>
<evidence type="ECO:0000305" key="2"/>
<reference key="1">
    <citation type="journal article" date="2008" name="Chem. Biol. Interact.">
        <title>Extending the Bacillus cereus group genomics to putative food-borne pathogens of different toxicity.</title>
        <authorList>
            <person name="Lapidus A."/>
            <person name="Goltsman E."/>
            <person name="Auger S."/>
            <person name="Galleron N."/>
            <person name="Segurens B."/>
            <person name="Dossat C."/>
            <person name="Land M.L."/>
            <person name="Broussolle V."/>
            <person name="Brillard J."/>
            <person name="Guinebretiere M.-H."/>
            <person name="Sanchis V."/>
            <person name="Nguen-the C."/>
            <person name="Lereclus D."/>
            <person name="Richardson P."/>
            <person name="Wincker P."/>
            <person name="Weissenbach J."/>
            <person name="Ehrlich S.D."/>
            <person name="Sorokin A."/>
        </authorList>
    </citation>
    <scope>NUCLEOTIDE SEQUENCE [LARGE SCALE GENOMIC DNA]</scope>
    <source>
        <strain>DSM 22905 / CIP 110041 / 391-98 / NVH 391-98</strain>
    </source>
</reference>
<protein>
    <recommendedName>
        <fullName evidence="1">Large ribosomal subunit protein bL9</fullName>
    </recommendedName>
    <alternativeName>
        <fullName evidence="2">50S ribosomal protein L9</fullName>
    </alternativeName>
</protein>
<accession>A7GVN2</accession>
<proteinExistence type="inferred from homology"/>
<gene>
    <name evidence="1" type="primary">rplI</name>
    <name type="ordered locus">Bcer98_4009</name>
</gene>
<comment type="function">
    <text evidence="1">Binds to the 23S rRNA.</text>
</comment>
<comment type="similarity">
    <text evidence="1">Belongs to the bacterial ribosomal protein bL9 family.</text>
</comment>